<dbReference type="EMBL" id="CP000438">
    <property type="protein sequence ID" value="ABJ14129.1"/>
    <property type="molecule type" value="Genomic_DNA"/>
</dbReference>
<dbReference type="RefSeq" id="WP_003095193.1">
    <property type="nucleotide sequence ID" value="NZ_CP034244.1"/>
</dbReference>
<dbReference type="SMR" id="Q02FS6"/>
<dbReference type="GeneID" id="77223281"/>
<dbReference type="KEGG" id="pau:PA14_62780"/>
<dbReference type="PseudoCAP" id="PA14_62780"/>
<dbReference type="HOGENOM" id="CLU_070525_1_1_6"/>
<dbReference type="BioCyc" id="PAER208963:G1G74-5309-MONOMER"/>
<dbReference type="Proteomes" id="UP000000653">
    <property type="component" value="Chromosome"/>
</dbReference>
<dbReference type="GO" id="GO:0005829">
    <property type="term" value="C:cytosol"/>
    <property type="evidence" value="ECO:0007669"/>
    <property type="project" value="TreeGrafter"/>
</dbReference>
<dbReference type="GO" id="GO:0000028">
    <property type="term" value="P:ribosomal small subunit assembly"/>
    <property type="evidence" value="ECO:0007669"/>
    <property type="project" value="TreeGrafter"/>
</dbReference>
<dbReference type="GO" id="GO:0006412">
    <property type="term" value="P:translation"/>
    <property type="evidence" value="ECO:0007669"/>
    <property type="project" value="TreeGrafter"/>
</dbReference>
<dbReference type="CDD" id="cd01734">
    <property type="entry name" value="YlxS_C"/>
    <property type="match status" value="1"/>
</dbReference>
<dbReference type="FunFam" id="2.30.30.180:FF:000004">
    <property type="entry name" value="Ribosome maturation factor RimP"/>
    <property type="match status" value="1"/>
</dbReference>
<dbReference type="FunFam" id="3.30.300.70:FF:000001">
    <property type="entry name" value="Ribosome maturation factor RimP"/>
    <property type="match status" value="1"/>
</dbReference>
<dbReference type="Gene3D" id="2.30.30.180">
    <property type="entry name" value="Ribosome maturation factor RimP, C-terminal domain"/>
    <property type="match status" value="1"/>
</dbReference>
<dbReference type="Gene3D" id="3.30.300.70">
    <property type="entry name" value="RimP-like superfamily, N-terminal"/>
    <property type="match status" value="1"/>
</dbReference>
<dbReference type="HAMAP" id="MF_01077">
    <property type="entry name" value="RimP"/>
    <property type="match status" value="1"/>
</dbReference>
<dbReference type="InterPro" id="IPR003728">
    <property type="entry name" value="Ribosome_maturation_RimP"/>
</dbReference>
<dbReference type="InterPro" id="IPR028998">
    <property type="entry name" value="RimP_C"/>
</dbReference>
<dbReference type="InterPro" id="IPR036847">
    <property type="entry name" value="RimP_C_sf"/>
</dbReference>
<dbReference type="InterPro" id="IPR028989">
    <property type="entry name" value="RimP_N"/>
</dbReference>
<dbReference type="InterPro" id="IPR035956">
    <property type="entry name" value="RimP_N_sf"/>
</dbReference>
<dbReference type="NCBIfam" id="NF000927">
    <property type="entry name" value="PRK00092.1-1"/>
    <property type="match status" value="1"/>
</dbReference>
<dbReference type="PANTHER" id="PTHR33867">
    <property type="entry name" value="RIBOSOME MATURATION FACTOR RIMP"/>
    <property type="match status" value="1"/>
</dbReference>
<dbReference type="PANTHER" id="PTHR33867:SF1">
    <property type="entry name" value="RIBOSOME MATURATION FACTOR RIMP"/>
    <property type="match status" value="1"/>
</dbReference>
<dbReference type="Pfam" id="PF17384">
    <property type="entry name" value="DUF150_C"/>
    <property type="match status" value="1"/>
</dbReference>
<dbReference type="Pfam" id="PF02576">
    <property type="entry name" value="RimP_N"/>
    <property type="match status" value="1"/>
</dbReference>
<dbReference type="SUPFAM" id="SSF74942">
    <property type="entry name" value="YhbC-like, C-terminal domain"/>
    <property type="match status" value="1"/>
</dbReference>
<dbReference type="SUPFAM" id="SSF75420">
    <property type="entry name" value="YhbC-like, N-terminal domain"/>
    <property type="match status" value="1"/>
</dbReference>
<accession>Q02FS6</accession>
<organism>
    <name type="scientific">Pseudomonas aeruginosa (strain UCBPP-PA14)</name>
    <dbReference type="NCBI Taxonomy" id="208963"/>
    <lineage>
        <taxon>Bacteria</taxon>
        <taxon>Pseudomonadati</taxon>
        <taxon>Pseudomonadota</taxon>
        <taxon>Gammaproteobacteria</taxon>
        <taxon>Pseudomonadales</taxon>
        <taxon>Pseudomonadaceae</taxon>
        <taxon>Pseudomonas</taxon>
    </lineage>
</organism>
<reference key="1">
    <citation type="journal article" date="2006" name="Genome Biol.">
        <title>Genomic analysis reveals that Pseudomonas aeruginosa virulence is combinatorial.</title>
        <authorList>
            <person name="Lee D.G."/>
            <person name="Urbach J.M."/>
            <person name="Wu G."/>
            <person name="Liberati N.T."/>
            <person name="Feinbaum R.L."/>
            <person name="Miyata S."/>
            <person name="Diggins L.T."/>
            <person name="He J."/>
            <person name="Saucier M."/>
            <person name="Deziel E."/>
            <person name="Friedman L."/>
            <person name="Li L."/>
            <person name="Grills G."/>
            <person name="Montgomery K."/>
            <person name="Kucherlapati R."/>
            <person name="Rahme L.G."/>
            <person name="Ausubel F.M."/>
        </authorList>
    </citation>
    <scope>NUCLEOTIDE SEQUENCE [LARGE SCALE GENOMIC DNA]</scope>
    <source>
        <strain>UCBPP-PA14</strain>
    </source>
</reference>
<comment type="function">
    <text evidence="1">Required for maturation of 30S ribosomal subunits.</text>
</comment>
<comment type="subcellular location">
    <subcellularLocation>
        <location evidence="1">Cytoplasm</location>
    </subcellularLocation>
</comment>
<comment type="similarity">
    <text evidence="1">Belongs to the RimP family.</text>
</comment>
<protein>
    <recommendedName>
        <fullName evidence="1">Ribosome maturation factor RimP</fullName>
    </recommendedName>
</protein>
<feature type="chain" id="PRO_1000064749" description="Ribosome maturation factor RimP">
    <location>
        <begin position="1"/>
        <end position="152"/>
    </location>
</feature>
<gene>
    <name evidence="1" type="primary">rimP</name>
    <name type="ordered locus">PA14_62780</name>
</gene>
<keyword id="KW-0963">Cytoplasm</keyword>
<keyword id="KW-0690">Ribosome biogenesis</keyword>
<evidence type="ECO:0000255" key="1">
    <source>
        <dbReference type="HAMAP-Rule" id="MF_01077"/>
    </source>
</evidence>
<proteinExistence type="inferred from homology"/>
<sequence>MSSKLEQLQALLAPVVEALGYECWGVEFISQGRHSVLRVYIDRPEGILIDDCEAVSRQVSGILDVEDPISGEYTLEVSSPGMDRPLFTLEQFAKHAGEQVKIRLRSPYEGRRNYQGILRGVEEQDVVVLVDDHEYLLPIDSIDKANIIPRFD</sequence>
<name>RIMP_PSEAB</name>